<gene>
    <name evidence="1" type="primary">groEL</name>
    <name evidence="1" type="synonym">groL</name>
    <name type="ordered locus">Rmet_0616</name>
</gene>
<evidence type="ECO:0000255" key="1">
    <source>
        <dbReference type="HAMAP-Rule" id="MF_00600"/>
    </source>
</evidence>
<dbReference type="EC" id="5.6.1.7" evidence="1"/>
<dbReference type="EMBL" id="CP000352">
    <property type="protein sequence ID" value="ABF07502.1"/>
    <property type="molecule type" value="Genomic_DNA"/>
</dbReference>
<dbReference type="RefSeq" id="WP_008644493.1">
    <property type="nucleotide sequence ID" value="NC_007973.1"/>
</dbReference>
<dbReference type="SMR" id="Q1LQS4"/>
<dbReference type="STRING" id="266264.Rmet_0616"/>
<dbReference type="GeneID" id="60824213"/>
<dbReference type="KEGG" id="rme:Rmet_0616"/>
<dbReference type="eggNOG" id="COG0459">
    <property type="taxonomic scope" value="Bacteria"/>
</dbReference>
<dbReference type="HOGENOM" id="CLU_016503_3_0_4"/>
<dbReference type="Proteomes" id="UP000002429">
    <property type="component" value="Chromosome"/>
</dbReference>
<dbReference type="GO" id="GO:0005737">
    <property type="term" value="C:cytoplasm"/>
    <property type="evidence" value="ECO:0007669"/>
    <property type="project" value="UniProtKB-SubCell"/>
</dbReference>
<dbReference type="GO" id="GO:0005524">
    <property type="term" value="F:ATP binding"/>
    <property type="evidence" value="ECO:0007669"/>
    <property type="project" value="UniProtKB-UniRule"/>
</dbReference>
<dbReference type="GO" id="GO:0140662">
    <property type="term" value="F:ATP-dependent protein folding chaperone"/>
    <property type="evidence" value="ECO:0007669"/>
    <property type="project" value="InterPro"/>
</dbReference>
<dbReference type="GO" id="GO:0016853">
    <property type="term" value="F:isomerase activity"/>
    <property type="evidence" value="ECO:0007669"/>
    <property type="project" value="UniProtKB-KW"/>
</dbReference>
<dbReference type="GO" id="GO:0051082">
    <property type="term" value="F:unfolded protein binding"/>
    <property type="evidence" value="ECO:0007669"/>
    <property type="project" value="UniProtKB-UniRule"/>
</dbReference>
<dbReference type="GO" id="GO:0042026">
    <property type="term" value="P:protein refolding"/>
    <property type="evidence" value="ECO:0007669"/>
    <property type="project" value="UniProtKB-UniRule"/>
</dbReference>
<dbReference type="CDD" id="cd03344">
    <property type="entry name" value="GroEL"/>
    <property type="match status" value="1"/>
</dbReference>
<dbReference type="FunFam" id="1.10.560.10:FF:000001">
    <property type="entry name" value="60 kDa chaperonin"/>
    <property type="match status" value="1"/>
</dbReference>
<dbReference type="FunFam" id="3.50.7.10:FF:000001">
    <property type="entry name" value="60 kDa chaperonin"/>
    <property type="match status" value="1"/>
</dbReference>
<dbReference type="Gene3D" id="3.50.7.10">
    <property type="entry name" value="GroEL"/>
    <property type="match status" value="1"/>
</dbReference>
<dbReference type="Gene3D" id="1.10.560.10">
    <property type="entry name" value="GroEL-like equatorial domain"/>
    <property type="match status" value="1"/>
</dbReference>
<dbReference type="Gene3D" id="3.30.260.10">
    <property type="entry name" value="TCP-1-like chaperonin intermediate domain"/>
    <property type="match status" value="1"/>
</dbReference>
<dbReference type="HAMAP" id="MF_00600">
    <property type="entry name" value="CH60"/>
    <property type="match status" value="1"/>
</dbReference>
<dbReference type="InterPro" id="IPR018370">
    <property type="entry name" value="Chaperonin_Cpn60_CS"/>
</dbReference>
<dbReference type="InterPro" id="IPR001844">
    <property type="entry name" value="Cpn60/GroEL"/>
</dbReference>
<dbReference type="InterPro" id="IPR002423">
    <property type="entry name" value="Cpn60/GroEL/TCP-1"/>
</dbReference>
<dbReference type="InterPro" id="IPR027409">
    <property type="entry name" value="GroEL-like_apical_dom_sf"/>
</dbReference>
<dbReference type="InterPro" id="IPR027413">
    <property type="entry name" value="GROEL-like_equatorial_sf"/>
</dbReference>
<dbReference type="InterPro" id="IPR027410">
    <property type="entry name" value="TCP-1-like_intermed_sf"/>
</dbReference>
<dbReference type="NCBIfam" id="TIGR02348">
    <property type="entry name" value="GroEL"/>
    <property type="match status" value="1"/>
</dbReference>
<dbReference type="NCBIfam" id="NF000592">
    <property type="entry name" value="PRK00013.1"/>
    <property type="match status" value="1"/>
</dbReference>
<dbReference type="NCBIfam" id="NF009487">
    <property type="entry name" value="PRK12849.1"/>
    <property type="match status" value="1"/>
</dbReference>
<dbReference type="NCBIfam" id="NF009488">
    <property type="entry name" value="PRK12850.1"/>
    <property type="match status" value="1"/>
</dbReference>
<dbReference type="NCBIfam" id="NF009489">
    <property type="entry name" value="PRK12851.1"/>
    <property type="match status" value="1"/>
</dbReference>
<dbReference type="PANTHER" id="PTHR45633">
    <property type="entry name" value="60 KDA HEAT SHOCK PROTEIN, MITOCHONDRIAL"/>
    <property type="match status" value="1"/>
</dbReference>
<dbReference type="Pfam" id="PF00118">
    <property type="entry name" value="Cpn60_TCP1"/>
    <property type="match status" value="1"/>
</dbReference>
<dbReference type="PRINTS" id="PR00298">
    <property type="entry name" value="CHAPERONIN60"/>
</dbReference>
<dbReference type="SUPFAM" id="SSF52029">
    <property type="entry name" value="GroEL apical domain-like"/>
    <property type="match status" value="1"/>
</dbReference>
<dbReference type="SUPFAM" id="SSF48592">
    <property type="entry name" value="GroEL equatorial domain-like"/>
    <property type="match status" value="1"/>
</dbReference>
<dbReference type="SUPFAM" id="SSF54849">
    <property type="entry name" value="GroEL-intermediate domain like"/>
    <property type="match status" value="1"/>
</dbReference>
<dbReference type="PROSITE" id="PS00296">
    <property type="entry name" value="CHAPERONINS_CPN60"/>
    <property type="match status" value="1"/>
</dbReference>
<feature type="chain" id="PRO_0000256957" description="Chaperonin GroEL">
    <location>
        <begin position="1"/>
        <end position="547"/>
    </location>
</feature>
<feature type="binding site" evidence="1">
    <location>
        <begin position="30"/>
        <end position="33"/>
    </location>
    <ligand>
        <name>ATP</name>
        <dbReference type="ChEBI" id="CHEBI:30616"/>
    </ligand>
</feature>
<feature type="binding site" evidence="1">
    <location>
        <position position="51"/>
    </location>
    <ligand>
        <name>ATP</name>
        <dbReference type="ChEBI" id="CHEBI:30616"/>
    </ligand>
</feature>
<feature type="binding site" evidence="1">
    <location>
        <begin position="87"/>
        <end position="91"/>
    </location>
    <ligand>
        <name>ATP</name>
        <dbReference type="ChEBI" id="CHEBI:30616"/>
    </ligand>
</feature>
<feature type="binding site" evidence="1">
    <location>
        <position position="415"/>
    </location>
    <ligand>
        <name>ATP</name>
        <dbReference type="ChEBI" id="CHEBI:30616"/>
    </ligand>
</feature>
<feature type="binding site" evidence="1">
    <location>
        <begin position="479"/>
        <end position="481"/>
    </location>
    <ligand>
        <name>ATP</name>
        <dbReference type="ChEBI" id="CHEBI:30616"/>
    </ligand>
</feature>
<feature type="binding site" evidence="1">
    <location>
        <position position="495"/>
    </location>
    <ligand>
        <name>ATP</name>
        <dbReference type="ChEBI" id="CHEBI:30616"/>
    </ligand>
</feature>
<sequence length="547" mass="57378">MAAKDVVFGDAARAKMVEGVNILANAVKVTLGPKGRNVVLERSFGGPTVTKDGVSVAKEIELKDKLQNMGAQMVKEVASKTSDNAGDGTTTATVLAQSIVREGMKFVAAGMNPMDLKRGIDKAVGAAVEELKKLSKPTTTSKEIAQVGAISANSDASIGERIAEAMDKVGKEGVITVEDGKSLADELEVVEGMQFDRGYLSPYFINNPEKQVVQLDSPFVLLFDKKVSNIRDLLPVLEQVAKAGRPLLIIAEDVEGEALATLVVNNIRGILKTAAVKAPGFGDRRKAMLEDIAILTGGTVIAEEIGLTLEKATLQDLGQAKRIEIGKENTIIIDGAGDASAIEGRVKQIRAQIEEATSDYDREKLQERVAKLAGGVAVIKVGAATEVEMKEKKARVEDALHATRAAVEEGIVPGGGVALLRARAAIAGLHGENPDQNAGIKIVLRAMEEPLRQIVLNAGEEASVVVAKVIEGKGNYGYNAASGEYGDLVEMGVLDPTKVTRTALQNAASVASLMLTTDCAVAESPKEESAPAMPGGMGGMGGMEGMM</sequence>
<keyword id="KW-0067">ATP-binding</keyword>
<keyword id="KW-0143">Chaperone</keyword>
<keyword id="KW-0963">Cytoplasm</keyword>
<keyword id="KW-0413">Isomerase</keyword>
<keyword id="KW-0547">Nucleotide-binding</keyword>
<keyword id="KW-1185">Reference proteome</keyword>
<name>CH60_CUPMC</name>
<reference key="1">
    <citation type="journal article" date="2010" name="PLoS ONE">
        <title>The complete genome sequence of Cupriavidus metallidurans strain CH34, a master survivalist in harsh and anthropogenic environments.</title>
        <authorList>
            <person name="Janssen P.J."/>
            <person name="Van Houdt R."/>
            <person name="Moors H."/>
            <person name="Monsieurs P."/>
            <person name="Morin N."/>
            <person name="Michaux A."/>
            <person name="Benotmane M.A."/>
            <person name="Leys N."/>
            <person name="Vallaeys T."/>
            <person name="Lapidus A."/>
            <person name="Monchy S."/>
            <person name="Medigue C."/>
            <person name="Taghavi S."/>
            <person name="McCorkle S."/>
            <person name="Dunn J."/>
            <person name="van der Lelie D."/>
            <person name="Mergeay M."/>
        </authorList>
    </citation>
    <scope>NUCLEOTIDE SEQUENCE [LARGE SCALE GENOMIC DNA]</scope>
    <source>
        <strain>ATCC 43123 / DSM 2839 / NBRC 102507 / CH34</strain>
    </source>
</reference>
<proteinExistence type="inferred from homology"/>
<protein>
    <recommendedName>
        <fullName evidence="1">Chaperonin GroEL</fullName>
        <ecNumber evidence="1">5.6.1.7</ecNumber>
    </recommendedName>
    <alternativeName>
        <fullName evidence="1">60 kDa chaperonin</fullName>
    </alternativeName>
    <alternativeName>
        <fullName evidence="1">Chaperonin-60</fullName>
        <shortName evidence="1">Cpn60</shortName>
    </alternativeName>
</protein>
<accession>Q1LQS4</accession>
<comment type="function">
    <text evidence="1">Together with its co-chaperonin GroES, plays an essential role in assisting protein folding. The GroEL-GroES system forms a nano-cage that allows encapsulation of the non-native substrate proteins and provides a physical environment optimized to promote and accelerate protein folding.</text>
</comment>
<comment type="catalytic activity">
    <reaction evidence="1">
        <text>ATP + H2O + a folded polypeptide = ADP + phosphate + an unfolded polypeptide.</text>
        <dbReference type="EC" id="5.6.1.7"/>
    </reaction>
</comment>
<comment type="subunit">
    <text evidence="1">Forms a cylinder of 14 subunits composed of two heptameric rings stacked back-to-back. Interacts with the co-chaperonin GroES.</text>
</comment>
<comment type="subcellular location">
    <subcellularLocation>
        <location evidence="1">Cytoplasm</location>
    </subcellularLocation>
</comment>
<comment type="similarity">
    <text evidence="1">Belongs to the chaperonin (HSP60) family.</text>
</comment>
<organism>
    <name type="scientific">Cupriavidus metallidurans (strain ATCC 43123 / DSM 2839 / NBRC 102507 / CH34)</name>
    <name type="common">Ralstonia metallidurans</name>
    <dbReference type="NCBI Taxonomy" id="266264"/>
    <lineage>
        <taxon>Bacteria</taxon>
        <taxon>Pseudomonadati</taxon>
        <taxon>Pseudomonadota</taxon>
        <taxon>Betaproteobacteria</taxon>
        <taxon>Burkholderiales</taxon>
        <taxon>Burkholderiaceae</taxon>
        <taxon>Cupriavidus</taxon>
    </lineage>
</organism>